<keyword id="KW-1185">Reference proteome</keyword>
<accession>Q6AY31</accession>
<sequence length="117" mass="13331">MAYGLPRRNTVQNILKGSCYKIQEPWDLAELTKTWYSNLTNINLPFLGEIAFGSPMNLLAGQTKQDCPLPSMQTMALEKEYEAKRLAKLKSKENACKEMQVSLREKSVGLRRPLQPK</sequence>
<feature type="chain" id="PRO_0000268822" description="Uncharacterized protein C4orf36 homolog">
    <location>
        <begin position="1"/>
        <end position="117"/>
    </location>
</feature>
<protein>
    <recommendedName>
        <fullName>Uncharacterized protein C4orf36 homolog</fullName>
    </recommendedName>
</protein>
<organism>
    <name type="scientific">Rattus norvegicus</name>
    <name type="common">Rat</name>
    <dbReference type="NCBI Taxonomy" id="10116"/>
    <lineage>
        <taxon>Eukaryota</taxon>
        <taxon>Metazoa</taxon>
        <taxon>Chordata</taxon>
        <taxon>Craniata</taxon>
        <taxon>Vertebrata</taxon>
        <taxon>Euteleostomi</taxon>
        <taxon>Mammalia</taxon>
        <taxon>Eutheria</taxon>
        <taxon>Euarchontoglires</taxon>
        <taxon>Glires</taxon>
        <taxon>Rodentia</taxon>
        <taxon>Myomorpha</taxon>
        <taxon>Muroidea</taxon>
        <taxon>Muridae</taxon>
        <taxon>Murinae</taxon>
        <taxon>Rattus</taxon>
    </lineage>
</organism>
<name>CD036_RAT</name>
<reference key="1">
    <citation type="journal article" date="2004" name="Genome Res.">
        <title>The status, quality, and expansion of the NIH full-length cDNA project: the Mammalian Gene Collection (MGC).</title>
        <authorList>
            <consortium name="The MGC Project Team"/>
        </authorList>
    </citation>
    <scope>NUCLEOTIDE SEQUENCE [LARGE SCALE MRNA]</scope>
    <source>
        <tissue>Testis</tissue>
    </source>
</reference>
<dbReference type="EMBL" id="BC079214">
    <property type="protein sequence ID" value="AAH79214.1"/>
    <property type="molecule type" value="mRNA"/>
</dbReference>
<dbReference type="RefSeq" id="NP_001017495.1">
    <property type="nucleotide sequence ID" value="NM_001017495.1"/>
</dbReference>
<dbReference type="RefSeq" id="XP_017454816.2">
    <property type="nucleotide sequence ID" value="XM_017599327.3"/>
</dbReference>
<dbReference type="RefSeq" id="XP_063129522.1">
    <property type="nucleotide sequence ID" value="XM_063273452.1"/>
</dbReference>
<dbReference type="FunCoup" id="Q6AY31">
    <property type="interactions" value="3"/>
</dbReference>
<dbReference type="STRING" id="10116.ENSRNOP00000069046"/>
<dbReference type="PhosphoSitePlus" id="Q6AY31"/>
<dbReference type="PaxDb" id="10116-ENSRNOP00000064774"/>
<dbReference type="Ensembl" id="ENSRNOT00000077215.2">
    <property type="protein sequence ID" value="ENSRNOP00000069716.1"/>
    <property type="gene ID" value="ENSRNOG00000060245.2"/>
</dbReference>
<dbReference type="GeneID" id="498330"/>
<dbReference type="KEGG" id="rno:498330"/>
<dbReference type="AGR" id="RGD:1564576"/>
<dbReference type="CTD" id="498330"/>
<dbReference type="RGD" id="1564576">
    <property type="gene designation" value="C14h4orf36"/>
</dbReference>
<dbReference type="eggNOG" id="ENOG502SVGH">
    <property type="taxonomic scope" value="Eukaryota"/>
</dbReference>
<dbReference type="GeneTree" id="ENSGT00390000015549"/>
<dbReference type="HOGENOM" id="CLU_140433_0_0_1"/>
<dbReference type="InParanoid" id="Q6AY31"/>
<dbReference type="OMA" id="YEVQEPW"/>
<dbReference type="OrthoDB" id="9821984at2759"/>
<dbReference type="PhylomeDB" id="Q6AY31"/>
<dbReference type="TreeFam" id="TF336886"/>
<dbReference type="PRO" id="PR:Q6AY31"/>
<dbReference type="Proteomes" id="UP000002494">
    <property type="component" value="Chromosome 14"/>
</dbReference>
<dbReference type="Bgee" id="ENSRNOG00000060245">
    <property type="expression patterns" value="Expressed in testis and 4 other cell types or tissues"/>
</dbReference>
<dbReference type="ExpressionAtlas" id="Q6AY31">
    <property type="expression patterns" value="baseline"/>
</dbReference>
<dbReference type="InterPro" id="IPR027825">
    <property type="entry name" value="DUF4522"/>
</dbReference>
<dbReference type="PANTHER" id="PTHR38002">
    <property type="entry name" value="C4ORF36 ISOFORM 11"/>
    <property type="match status" value="1"/>
</dbReference>
<dbReference type="PANTHER" id="PTHR38002:SF1">
    <property type="entry name" value="CHROMOSOME 4 OPEN READING FRAME 36"/>
    <property type="match status" value="1"/>
</dbReference>
<dbReference type="Pfam" id="PF15022">
    <property type="entry name" value="DUF4522"/>
    <property type="match status" value="1"/>
</dbReference>
<proteinExistence type="predicted"/>